<organism>
    <name type="scientific">Escherichia coli (strain K12)</name>
    <dbReference type="NCBI Taxonomy" id="83333"/>
    <lineage>
        <taxon>Bacteria</taxon>
        <taxon>Pseudomonadati</taxon>
        <taxon>Pseudomonadota</taxon>
        <taxon>Gammaproteobacteria</taxon>
        <taxon>Enterobacterales</taxon>
        <taxon>Enterobacteriaceae</taxon>
        <taxon>Escherichia</taxon>
    </lineage>
</organism>
<reference key="1">
    <citation type="journal article" date="1993" name="Nucleic Acids Res.">
        <title>Analysis of the Escherichia coli genome. IV. DNA sequence of the region from 89.2 to 92.8 minutes.</title>
        <authorList>
            <person name="Blattner F.R."/>
            <person name="Burland V.D."/>
            <person name="Plunkett G. III"/>
            <person name="Sofia H.J."/>
            <person name="Daniels D.L."/>
        </authorList>
    </citation>
    <scope>NUCLEOTIDE SEQUENCE [LARGE SCALE GENOMIC DNA]</scope>
    <source>
        <strain>K12 / MG1655 / ATCC 47076</strain>
    </source>
</reference>
<reference key="2">
    <citation type="journal article" date="1997" name="Science">
        <title>The complete genome sequence of Escherichia coli K-12.</title>
        <authorList>
            <person name="Blattner F.R."/>
            <person name="Plunkett G. III"/>
            <person name="Bloch C.A."/>
            <person name="Perna N.T."/>
            <person name="Burland V."/>
            <person name="Riley M."/>
            <person name="Collado-Vides J."/>
            <person name="Glasner J.D."/>
            <person name="Rode C.K."/>
            <person name="Mayhew G.F."/>
            <person name="Gregor J."/>
            <person name="Davis N.W."/>
            <person name="Kirkpatrick H.A."/>
            <person name="Goeden M.A."/>
            <person name="Rose D.J."/>
            <person name="Mau B."/>
            <person name="Shao Y."/>
        </authorList>
    </citation>
    <scope>NUCLEOTIDE SEQUENCE [LARGE SCALE GENOMIC DNA]</scope>
    <source>
        <strain>K12 / MG1655 / ATCC 47076</strain>
    </source>
</reference>
<reference key="3">
    <citation type="journal article" date="2006" name="Mol. Syst. Biol.">
        <title>Highly accurate genome sequences of Escherichia coli K-12 strains MG1655 and W3110.</title>
        <authorList>
            <person name="Hayashi K."/>
            <person name="Morooka N."/>
            <person name="Yamamoto Y."/>
            <person name="Fujita K."/>
            <person name="Isono K."/>
            <person name="Choi S."/>
            <person name="Ohtsubo E."/>
            <person name="Baba T."/>
            <person name="Wanner B.L."/>
            <person name="Mori H."/>
            <person name="Horiuchi T."/>
        </authorList>
    </citation>
    <scope>NUCLEOTIDE SEQUENCE [LARGE SCALE GENOMIC DNA]</scope>
    <source>
        <strain>K12 / W3110 / ATCC 27325 / DSM 5911</strain>
    </source>
</reference>
<reference key="4">
    <citation type="journal article" date="1995" name="Microbiology">
        <title>Novel phosphotransferase system genes revealed by bacterial genome analysis -- a gene cluster encoding a unique Enzyme I and the proteins of a fructose-like permease system.</title>
        <authorList>
            <person name="Reizer J."/>
            <person name="Reizer A."/>
            <person name="Saier M.H. Jr."/>
        </authorList>
    </citation>
    <scope>DISCUSSION OF SEQUENCE</scope>
</reference>
<reference key="5">
    <citation type="journal article" date="2001" name="J. Biol. Chem.">
        <title>Fructose-6-phosphate aldolase is a novel class I aldolase from Escherichia coli and is related to a novel group of bacterial transaldolases.</title>
        <authorList>
            <person name="Schuermann M."/>
            <person name="Sprenger G.A."/>
        </authorList>
    </citation>
    <scope>FUNCTION</scope>
    <scope>CATALYTIC ACTIVITY</scope>
    <source>
        <strain>K12 / MC4100 / ATCC 35695 / DSM 6574</strain>
    </source>
</reference>
<reference key="6">
    <citation type="journal article" date="2012" name="J. Mol. Catal., B Enzym.">
        <title>FSAB: A new fructose-6-phosphate aldolase from Escherichia coli. Cloning, over-expression and comparative kinetic characterization with FSAA.</title>
        <authorList>
            <person name="Sanchez-Moreno I."/>
            <person name="Nauton L."/>
            <person name="Thery V."/>
            <person name="Pinet A."/>
            <person name="Petit J.-L."/>
            <person name="de Berardinis V."/>
            <person name="Samland A.K."/>
            <person name="Guerard-Helaine C."/>
            <person name="Lemaire M."/>
        </authorList>
    </citation>
    <scope>FUNCTION</scope>
    <scope>CATALYTIC ACTIVITY</scope>
    <scope>SUBSTRATE SPECIFICITY</scope>
    <scope>BIOPHYSICOCHEMICAL PROPERTIES</scope>
    <scope>SUBUNIT</scope>
    <scope>3D-STRUCTURE MODELING</scope>
    <source>
        <strain>K12 / MC4100 / ATCC 35695 / DSM 6574</strain>
    </source>
</reference>
<gene>
    <name type="primary">fsaB</name>
    <name type="synonym">talC</name>
    <name type="synonym">yijG</name>
    <name type="ordered locus">b3946</name>
    <name type="ordered locus">JW3918</name>
</gene>
<keyword id="KW-0119">Carbohydrate metabolism</keyword>
<keyword id="KW-0963">Cytoplasm</keyword>
<keyword id="KW-0456">Lyase</keyword>
<keyword id="KW-1185">Reference proteome</keyword>
<keyword id="KW-0704">Schiff base</keyword>
<dbReference type="EC" id="4.1.2.-"/>
<dbReference type="EMBL" id="U00006">
    <property type="protein sequence ID" value="AAC43052.1"/>
    <property type="molecule type" value="Genomic_DNA"/>
</dbReference>
<dbReference type="EMBL" id="U00096">
    <property type="protein sequence ID" value="AAC76928.1"/>
    <property type="molecule type" value="Genomic_DNA"/>
</dbReference>
<dbReference type="EMBL" id="AP009048">
    <property type="protein sequence ID" value="BAE77364.1"/>
    <property type="molecule type" value="Genomic_DNA"/>
</dbReference>
<dbReference type="PIR" id="E65201">
    <property type="entry name" value="E65201"/>
</dbReference>
<dbReference type="RefSeq" id="NP_418381.1">
    <property type="nucleotide sequence ID" value="NC_000913.3"/>
</dbReference>
<dbReference type="SMR" id="P32669"/>
<dbReference type="BioGRID" id="4263139">
    <property type="interactions" value="20"/>
</dbReference>
<dbReference type="BioGRID" id="852736">
    <property type="interactions" value="3"/>
</dbReference>
<dbReference type="FunCoup" id="P32669">
    <property type="interactions" value="247"/>
</dbReference>
<dbReference type="IntAct" id="P32669">
    <property type="interactions" value="5"/>
</dbReference>
<dbReference type="STRING" id="511145.b3946"/>
<dbReference type="jPOST" id="P32669"/>
<dbReference type="PaxDb" id="511145-b3946"/>
<dbReference type="EnsemblBacteria" id="AAC76928">
    <property type="protein sequence ID" value="AAC76928"/>
    <property type="gene ID" value="b3946"/>
</dbReference>
<dbReference type="GeneID" id="948439"/>
<dbReference type="KEGG" id="ecj:JW3918"/>
<dbReference type="KEGG" id="eco:b3946"/>
<dbReference type="KEGG" id="ecoc:C3026_21330"/>
<dbReference type="PATRIC" id="fig|1411691.4.peg.2758"/>
<dbReference type="EchoBASE" id="EB1850"/>
<dbReference type="eggNOG" id="COG0176">
    <property type="taxonomic scope" value="Bacteria"/>
</dbReference>
<dbReference type="HOGENOM" id="CLU_079764_2_0_6"/>
<dbReference type="InParanoid" id="P32669"/>
<dbReference type="OMA" id="DWNNAFG"/>
<dbReference type="OrthoDB" id="9807051at2"/>
<dbReference type="PhylomeDB" id="P32669"/>
<dbReference type="BioCyc" id="EcoCyc:EG11905-MONOMER"/>
<dbReference type="BioCyc" id="MetaCyc:EG11905-MONOMER"/>
<dbReference type="PRO" id="PR:P32669"/>
<dbReference type="Proteomes" id="UP000000625">
    <property type="component" value="Chromosome"/>
</dbReference>
<dbReference type="GO" id="GO:0005737">
    <property type="term" value="C:cytoplasm"/>
    <property type="evidence" value="ECO:0007669"/>
    <property type="project" value="UniProtKB-SubCell"/>
</dbReference>
<dbReference type="GO" id="GO:0097023">
    <property type="term" value="F:fructose 6-phosphate aldolase activity"/>
    <property type="evidence" value="ECO:0007669"/>
    <property type="project" value="RHEA"/>
</dbReference>
<dbReference type="GO" id="GO:0006000">
    <property type="term" value="P:fructose metabolic process"/>
    <property type="evidence" value="ECO:0007669"/>
    <property type="project" value="UniProtKB-UniRule"/>
</dbReference>
<dbReference type="GO" id="GO:0042182">
    <property type="term" value="P:ketone catabolic process"/>
    <property type="evidence" value="ECO:0000315"/>
    <property type="project" value="EcoCyc"/>
</dbReference>
<dbReference type="CDD" id="cd00956">
    <property type="entry name" value="Transaldolase_FSA"/>
    <property type="match status" value="1"/>
</dbReference>
<dbReference type="FunFam" id="3.20.20.70:FF:000018">
    <property type="entry name" value="Probable transaldolase"/>
    <property type="match status" value="1"/>
</dbReference>
<dbReference type="Gene3D" id="3.20.20.70">
    <property type="entry name" value="Aldolase class I"/>
    <property type="match status" value="1"/>
</dbReference>
<dbReference type="HAMAP" id="MF_00496">
    <property type="entry name" value="F6P_aldolase"/>
    <property type="match status" value="1"/>
</dbReference>
<dbReference type="InterPro" id="IPR013785">
    <property type="entry name" value="Aldolase_TIM"/>
</dbReference>
<dbReference type="InterPro" id="IPR023001">
    <property type="entry name" value="F6P_aldolase"/>
</dbReference>
<dbReference type="InterPro" id="IPR001585">
    <property type="entry name" value="TAL/FSA"/>
</dbReference>
<dbReference type="InterPro" id="IPR004731">
    <property type="entry name" value="Transaldolase_3B/F6P_aldolase"/>
</dbReference>
<dbReference type="InterPro" id="IPR018225">
    <property type="entry name" value="Transaldolase_AS"/>
</dbReference>
<dbReference type="InterPro" id="IPR033919">
    <property type="entry name" value="TSA/FSA_arc/bac"/>
</dbReference>
<dbReference type="NCBIfam" id="TIGR00875">
    <property type="entry name" value="fsa_talC_mipB"/>
    <property type="match status" value="1"/>
</dbReference>
<dbReference type="NCBIfam" id="NF009296">
    <property type="entry name" value="PRK12653.1"/>
    <property type="match status" value="1"/>
</dbReference>
<dbReference type="PANTHER" id="PTHR10683:SF40">
    <property type="entry name" value="FRUCTOSE-6-PHOSPHATE ALDOLASE 1-RELATED"/>
    <property type="match status" value="1"/>
</dbReference>
<dbReference type="PANTHER" id="PTHR10683">
    <property type="entry name" value="TRANSALDOLASE"/>
    <property type="match status" value="1"/>
</dbReference>
<dbReference type="Pfam" id="PF00923">
    <property type="entry name" value="TAL_FSA"/>
    <property type="match status" value="1"/>
</dbReference>
<dbReference type="SUPFAM" id="SSF51569">
    <property type="entry name" value="Aldolase"/>
    <property type="match status" value="1"/>
</dbReference>
<dbReference type="PROSITE" id="PS01054">
    <property type="entry name" value="TRANSALDOLASE_1"/>
    <property type="match status" value="1"/>
</dbReference>
<dbReference type="PROSITE" id="PS00958">
    <property type="entry name" value="TRANSALDOLASE_2"/>
    <property type="match status" value="1"/>
</dbReference>
<feature type="chain" id="PRO_0000173646" description="Fructose-6-phosphate aldolase 2">
    <location>
        <begin position="1"/>
        <end position="220"/>
    </location>
</feature>
<feature type="active site" description="Schiff-base intermediate with substrate" evidence="1">
    <location>
        <position position="85"/>
    </location>
</feature>
<comment type="function">
    <text evidence="2 3">Catalyzes the reversible formation of fructose 6-phosphate from dihydroxyacetone and D-glyceraldehyde 3-phosphate via an aldolization reaction. Can utilize hydroxyacetone as an alternative donor substrate. Is also able to catalyze the direct self-aldol addition of glycolaldehyde. Is less catalytically efficient than the isozyme FsaA. Does not display transaldolase activity.</text>
</comment>
<comment type="catalytic activity">
    <reaction evidence="2 3">
        <text>beta-D-fructose 6-phosphate = dihydroxyacetone + D-glyceraldehyde 3-phosphate</text>
        <dbReference type="Rhea" id="RHEA:28002"/>
        <dbReference type="ChEBI" id="CHEBI:16016"/>
        <dbReference type="ChEBI" id="CHEBI:57634"/>
        <dbReference type="ChEBI" id="CHEBI:59776"/>
    </reaction>
</comment>
<comment type="biophysicochemical properties">
    <kinetics>
        <KM evidence="3">27 mM for dihydroxyacetone</KM>
        <KM evidence="3">15 mM for hydroxyacetone</KM>
        <KM evidence="3">0.28 mM for glycolaldehyde (as donor substrate in the self-aldol addition of glycolaldehyde)</KM>
        <KM evidence="3">65 mM for glycolaldehyde (as acceptor substrate in the self-aldol addition of glycolaldehyde)</KM>
        <KM evidence="3">0.65 mM for D,L-glyceraldehyde 3-phosphate</KM>
        <KM evidence="3">6.7 mM for D-fructose 6-phosphate</KM>
        <KM evidence="3">210 mM for D-fructose</KM>
        <KM evidence="3">271 mM for D-sorbose</KM>
        <text>Catalytic efficiency is 28-fold higher using glyceraldehyde 3-phosphate as acceptor substrate and hydroxyacetone as donor substrate than with dihydroxyacetone as the donor.</text>
    </kinetics>
    <phDependence>
        <text evidence="3">Optimum pH is 8.5 for the retroaldol activity on F6P.</text>
    </phDependence>
    <temperatureDependence>
        <text evidence="3">Is not thermally stable at temperatures higher than 60 degrees Celsius. Is less thermostable than the isozyme FsaA.</text>
    </temperatureDependence>
</comment>
<comment type="subunit">
    <text evidence="3">Homodecamer.</text>
</comment>
<comment type="subcellular location">
    <subcellularLocation>
        <location evidence="1">Cytoplasm</location>
    </subcellularLocation>
</comment>
<comment type="similarity">
    <text evidence="4">Belongs to the transaldolase family. Type 3A subfamily.</text>
</comment>
<sequence length="220" mass="23555">MELYLDTANVAEVERLARIFPIAGVTTNPSIIAASKESIWEVLPRLQKAIGDEGILFAQTMSRDAQGMVEEAKRLRDAIPGIVVKIPVTSEGLAAIKILKKEGITTLGTAVYSAAQGLLAALAGAKYVAPYVNRVDAQGGDGIRTVQELQTLLEMHAPESMVLAASFKTPRQALDCLLAGCESITLPLDVAQQMLNTPAVESAIEKFEHDWNAAFGTTHL</sequence>
<name>FSAB_ECOLI</name>
<evidence type="ECO:0000250" key="1"/>
<evidence type="ECO:0000269" key="2">
    <source>
    </source>
</evidence>
<evidence type="ECO:0000269" key="3">
    <source ref="6"/>
</evidence>
<evidence type="ECO:0000305" key="4"/>
<protein>
    <recommendedName>
        <fullName>Fructose-6-phosphate aldolase 2</fullName>
        <ecNumber>4.1.2.-</ecNumber>
    </recommendedName>
    <alternativeName>
        <fullName>Fructose-6-phosphate aldolase B</fullName>
        <shortName>FSAB</shortName>
    </alternativeName>
</protein>
<proteinExistence type="evidence at protein level"/>
<accession>P32669</accession>
<accession>Q2M8P2</accession>